<evidence type="ECO:0000250" key="1"/>
<evidence type="ECO:0000255" key="2"/>
<evidence type="ECO:0000305" key="3"/>
<feature type="chain" id="PRO_0000091543" description="Bifunctional enzyme NodQ">
    <location>
        <begin position="1"/>
        <end position="646"/>
    </location>
</feature>
<feature type="domain" description="tr-type G">
    <location>
        <begin position="25"/>
        <end position="240"/>
    </location>
</feature>
<feature type="region of interest" description="Sulfate adenylyltransferase">
    <location>
        <begin position="1"/>
        <end position="461"/>
    </location>
</feature>
<feature type="region of interest" description="G1" evidence="1">
    <location>
        <begin position="34"/>
        <end position="41"/>
    </location>
</feature>
<feature type="region of interest" description="G2" evidence="1">
    <location>
        <begin position="92"/>
        <end position="96"/>
    </location>
</feature>
<feature type="region of interest" description="G3" evidence="1">
    <location>
        <begin position="113"/>
        <end position="116"/>
    </location>
</feature>
<feature type="region of interest" description="G4" evidence="1">
    <location>
        <begin position="168"/>
        <end position="171"/>
    </location>
</feature>
<feature type="region of interest" description="G5" evidence="1">
    <location>
        <begin position="205"/>
        <end position="207"/>
    </location>
</feature>
<feature type="region of interest" description="Adenylyl-sulfate kinase">
    <location>
        <begin position="462"/>
        <end position="646"/>
    </location>
</feature>
<feature type="active site" description="Phosphoserine intermediate" evidence="1">
    <location>
        <position position="544"/>
    </location>
</feature>
<feature type="binding site" evidence="1">
    <location>
        <begin position="34"/>
        <end position="41"/>
    </location>
    <ligand>
        <name>GTP</name>
        <dbReference type="ChEBI" id="CHEBI:37565"/>
    </ligand>
</feature>
<feature type="binding site" evidence="1">
    <location>
        <begin position="113"/>
        <end position="117"/>
    </location>
    <ligand>
        <name>GTP</name>
        <dbReference type="ChEBI" id="CHEBI:37565"/>
    </ligand>
</feature>
<feature type="binding site" evidence="1">
    <location>
        <begin position="168"/>
        <end position="171"/>
    </location>
    <ligand>
        <name>GTP</name>
        <dbReference type="ChEBI" id="CHEBI:37565"/>
    </ligand>
</feature>
<feature type="binding site" evidence="2">
    <location>
        <begin position="470"/>
        <end position="477"/>
    </location>
    <ligand>
        <name>ATP</name>
        <dbReference type="ChEBI" id="CHEBI:30616"/>
    </ligand>
</feature>
<dbReference type="EC" id="2.7.7.4"/>
<dbReference type="EC" id="2.7.1.25"/>
<dbReference type="EMBL" id="U53327">
    <property type="protein sequence ID" value="AAB16902.1"/>
    <property type="molecule type" value="Genomic_DNA"/>
</dbReference>
<dbReference type="SMR" id="P72339"/>
<dbReference type="GO" id="GO:0004020">
    <property type="term" value="F:adenylylsulfate kinase activity"/>
    <property type="evidence" value="ECO:0007669"/>
    <property type="project" value="UniProtKB-UniRule"/>
</dbReference>
<dbReference type="GO" id="GO:0005524">
    <property type="term" value="F:ATP binding"/>
    <property type="evidence" value="ECO:0007669"/>
    <property type="project" value="UniProtKB-UniRule"/>
</dbReference>
<dbReference type="GO" id="GO:0005525">
    <property type="term" value="F:GTP binding"/>
    <property type="evidence" value="ECO:0007669"/>
    <property type="project" value="UniProtKB-UniRule"/>
</dbReference>
<dbReference type="GO" id="GO:0003924">
    <property type="term" value="F:GTPase activity"/>
    <property type="evidence" value="ECO:0007669"/>
    <property type="project" value="InterPro"/>
</dbReference>
<dbReference type="GO" id="GO:0004781">
    <property type="term" value="F:sulfate adenylyltransferase (ATP) activity"/>
    <property type="evidence" value="ECO:0007669"/>
    <property type="project" value="UniProtKB-UniRule"/>
</dbReference>
<dbReference type="GO" id="GO:0070814">
    <property type="term" value="P:hydrogen sulfide biosynthetic process"/>
    <property type="evidence" value="ECO:0007669"/>
    <property type="project" value="UniProtKB-UniRule"/>
</dbReference>
<dbReference type="GO" id="GO:0000103">
    <property type="term" value="P:sulfate assimilation"/>
    <property type="evidence" value="ECO:0007669"/>
    <property type="project" value="UniProtKB-UniRule"/>
</dbReference>
<dbReference type="CDD" id="cd02027">
    <property type="entry name" value="APSK"/>
    <property type="match status" value="1"/>
</dbReference>
<dbReference type="CDD" id="cd04166">
    <property type="entry name" value="CysN_ATPS"/>
    <property type="match status" value="1"/>
</dbReference>
<dbReference type="CDD" id="cd03695">
    <property type="entry name" value="CysN_NodQ_II"/>
    <property type="match status" value="1"/>
</dbReference>
<dbReference type="CDD" id="cd04095">
    <property type="entry name" value="CysN_NoDQ_III"/>
    <property type="match status" value="1"/>
</dbReference>
<dbReference type="FunFam" id="3.40.50.300:FF:000119">
    <property type="entry name" value="Sulfate adenylyltransferase subunit 1"/>
    <property type="match status" value="1"/>
</dbReference>
<dbReference type="Gene3D" id="3.40.50.300">
    <property type="entry name" value="P-loop containing nucleotide triphosphate hydrolases"/>
    <property type="match status" value="2"/>
</dbReference>
<dbReference type="Gene3D" id="2.40.30.10">
    <property type="entry name" value="Translation factors"/>
    <property type="match status" value="2"/>
</dbReference>
<dbReference type="HAMAP" id="MF_00065">
    <property type="entry name" value="Adenylyl_sulf_kinase"/>
    <property type="match status" value="1"/>
</dbReference>
<dbReference type="HAMAP" id="MF_00062">
    <property type="entry name" value="Sulf_adenylyltr_sub1"/>
    <property type="match status" value="1"/>
</dbReference>
<dbReference type="InterPro" id="IPR002891">
    <property type="entry name" value="APS_kinase"/>
</dbReference>
<dbReference type="InterPro" id="IPR041757">
    <property type="entry name" value="CysN_GTP-bd"/>
</dbReference>
<dbReference type="InterPro" id="IPR044138">
    <property type="entry name" value="CysN_II"/>
</dbReference>
<dbReference type="InterPro" id="IPR044139">
    <property type="entry name" value="CysN_NoDQ_III"/>
</dbReference>
<dbReference type="InterPro" id="IPR031157">
    <property type="entry name" value="G_TR_CS"/>
</dbReference>
<dbReference type="InterPro" id="IPR054696">
    <property type="entry name" value="GTP-eEF1A_C"/>
</dbReference>
<dbReference type="InterPro" id="IPR027417">
    <property type="entry name" value="P-loop_NTPase"/>
</dbReference>
<dbReference type="InterPro" id="IPR005225">
    <property type="entry name" value="Small_GTP-bd"/>
</dbReference>
<dbReference type="InterPro" id="IPR011779">
    <property type="entry name" value="SO4_adenylTrfase_lsu"/>
</dbReference>
<dbReference type="InterPro" id="IPR000795">
    <property type="entry name" value="T_Tr_GTP-bd_dom"/>
</dbReference>
<dbReference type="InterPro" id="IPR050100">
    <property type="entry name" value="TRAFAC_GTPase_members"/>
</dbReference>
<dbReference type="InterPro" id="IPR009000">
    <property type="entry name" value="Transl_B-barrel_sf"/>
</dbReference>
<dbReference type="InterPro" id="IPR009001">
    <property type="entry name" value="Transl_elong_EF1A/Init_IF2_C"/>
</dbReference>
<dbReference type="NCBIfam" id="TIGR00455">
    <property type="entry name" value="apsK"/>
    <property type="match status" value="1"/>
</dbReference>
<dbReference type="NCBIfam" id="TIGR02034">
    <property type="entry name" value="CysN"/>
    <property type="match status" value="1"/>
</dbReference>
<dbReference type="NCBIfam" id="NF003013">
    <property type="entry name" value="PRK03846.1"/>
    <property type="match status" value="1"/>
</dbReference>
<dbReference type="NCBIfam" id="NF003478">
    <property type="entry name" value="PRK05124.1"/>
    <property type="match status" value="1"/>
</dbReference>
<dbReference type="NCBIfam" id="NF004035">
    <property type="entry name" value="PRK05506.1"/>
    <property type="match status" value="1"/>
</dbReference>
<dbReference type="NCBIfam" id="TIGR00231">
    <property type="entry name" value="small_GTP"/>
    <property type="match status" value="1"/>
</dbReference>
<dbReference type="PANTHER" id="PTHR23115">
    <property type="entry name" value="TRANSLATION FACTOR"/>
    <property type="match status" value="1"/>
</dbReference>
<dbReference type="Pfam" id="PF01583">
    <property type="entry name" value="APS_kinase"/>
    <property type="match status" value="1"/>
</dbReference>
<dbReference type="Pfam" id="PF22594">
    <property type="entry name" value="GTP-eEF1A_C"/>
    <property type="match status" value="1"/>
</dbReference>
<dbReference type="Pfam" id="PF00009">
    <property type="entry name" value="GTP_EFTU"/>
    <property type="match status" value="1"/>
</dbReference>
<dbReference type="PRINTS" id="PR00315">
    <property type="entry name" value="ELONGATNFCT"/>
</dbReference>
<dbReference type="SUPFAM" id="SSF50465">
    <property type="entry name" value="EF-Tu/eEF-1alpha/eIF2-gamma C-terminal domain"/>
    <property type="match status" value="1"/>
</dbReference>
<dbReference type="SUPFAM" id="SSF52540">
    <property type="entry name" value="P-loop containing nucleoside triphosphate hydrolases"/>
    <property type="match status" value="2"/>
</dbReference>
<dbReference type="SUPFAM" id="SSF50447">
    <property type="entry name" value="Translation proteins"/>
    <property type="match status" value="1"/>
</dbReference>
<dbReference type="PROSITE" id="PS00301">
    <property type="entry name" value="G_TR_1"/>
    <property type="match status" value="1"/>
</dbReference>
<dbReference type="PROSITE" id="PS51722">
    <property type="entry name" value="G_TR_2"/>
    <property type="match status" value="1"/>
</dbReference>
<comment type="function">
    <text evidence="1">Proposed to provide activated sulfate for transfer to Nod factor. ATP sulfurylase may be the GTPase, regulating ATP sulfurylase activity (By similarity).</text>
</comment>
<comment type="function">
    <text evidence="1">APS kinase catalyzes the synthesis of activated sulfate.</text>
</comment>
<comment type="catalytic activity">
    <reaction>
        <text>sulfate + ATP + H(+) = adenosine 5'-phosphosulfate + diphosphate</text>
        <dbReference type="Rhea" id="RHEA:18133"/>
        <dbReference type="ChEBI" id="CHEBI:15378"/>
        <dbReference type="ChEBI" id="CHEBI:16189"/>
        <dbReference type="ChEBI" id="CHEBI:30616"/>
        <dbReference type="ChEBI" id="CHEBI:33019"/>
        <dbReference type="ChEBI" id="CHEBI:58243"/>
        <dbReference type="EC" id="2.7.7.4"/>
    </reaction>
</comment>
<comment type="catalytic activity">
    <reaction>
        <text>adenosine 5'-phosphosulfate + ATP = 3'-phosphoadenylyl sulfate + ADP + H(+)</text>
        <dbReference type="Rhea" id="RHEA:24152"/>
        <dbReference type="ChEBI" id="CHEBI:15378"/>
        <dbReference type="ChEBI" id="CHEBI:30616"/>
        <dbReference type="ChEBI" id="CHEBI:58243"/>
        <dbReference type="ChEBI" id="CHEBI:58339"/>
        <dbReference type="ChEBI" id="CHEBI:456216"/>
        <dbReference type="EC" id="2.7.1.25"/>
    </reaction>
</comment>
<comment type="subunit">
    <text evidence="3">Sulfate-activating enzymes, NodP and NodQ, may be physically associated.</text>
</comment>
<comment type="similarity">
    <text evidence="3">In the C-terminal section; belongs to the APS kinase family.</text>
</comment>
<comment type="similarity">
    <text evidence="3">In the N-terminal section; belongs to the TRAFAC class translation factor GTPase superfamily. Classic translation factor GTPase family. CysN/NodQ subfamily.</text>
</comment>
<reference key="1">
    <citation type="submission" date="1996-04" db="EMBL/GenBank/DDBJ databases">
        <authorList>
            <person name="Cloutier J."/>
        </authorList>
    </citation>
    <scope>NUCLEOTIDE SEQUENCE [GENOMIC DNA]</scope>
</reference>
<name>NODQ_RHIS3</name>
<gene>
    <name type="primary">nodQ</name>
</gene>
<accession>P72339</accession>
<protein>
    <recommendedName>
        <fullName>Bifunctional enzyme NodQ</fullName>
    </recommendedName>
    <alternativeName>
        <fullName>Nodulation protein Q</fullName>
    </alternativeName>
    <domain>
        <recommendedName>
            <fullName>Sulfate adenylyltransferase subunit 1</fullName>
            <ecNumber>2.7.7.4</ecNumber>
        </recommendedName>
        <alternativeName>
            <fullName>ATP-sulfurylase large subunit</fullName>
        </alternativeName>
        <alternativeName>
            <fullName>Sulfate adenylate transferase</fullName>
            <shortName>SAT</shortName>
        </alternativeName>
    </domain>
    <domain>
        <recommendedName>
            <fullName>Adenylyl-sulfate kinase</fullName>
            <ecNumber>2.7.1.25</ecNumber>
        </recommendedName>
        <alternativeName>
            <fullName>APS kinase</fullName>
        </alternativeName>
        <alternativeName>
            <fullName>ATP adenosine-5'-phosphosulfate 3'-phosphotransferase</fullName>
        </alternativeName>
    </domain>
</protein>
<organism>
    <name type="scientific">Rhizobium sp. (strain N33)</name>
    <dbReference type="NCBI Taxonomy" id="103798"/>
    <lineage>
        <taxon>Bacteria</taxon>
        <taxon>Pseudomonadati</taxon>
        <taxon>Pseudomonadota</taxon>
        <taxon>Alphaproteobacteria</taxon>
        <taxon>Hyphomicrobiales</taxon>
        <taxon>Rhizobiaceae</taxon>
        <taxon>Rhizobium/Agrobacterium group</taxon>
        <taxon>Rhizobium</taxon>
    </lineage>
</organism>
<proteinExistence type="inferred from homology"/>
<sequence>MRHIMAKSLAPTDGVRDYLAAQEKKSLLRFLTCGSVDDGKSTLIGRLLSDTKQIFEDQLAALERDSRKHGTTGDDIDFALLVDGLEAEREQGITIDVAYRFFATPKRKFIVADTPGHEQYTRNMATGASTADLAIVLIDARQGVLRQTRRHSIIASLLGIRHIVLAVNKIDLVGFDQAVFERITESYRQFSRDLGFQTIVPIPMSARYGDNVTSRSESMEWYSGPTLIEHLETVSVEEAVVELPFRFPVQYVNRPNLDFRGFAGTVASGSVAPGDEVVVAKSGKSSRVKRIVSYGGDLAQAAAGQAVTLVLDDEVEISRGNMLVSPAARPQVADQFAANIVWFDEHALLPGRSYILRTETDQTSATVTDLKYRINVNDFAHEAAKSLEMNEVGICNISTRSPIAFDTFAENRTTGAFILIDRITNATVGAGMILHSLRRAENIHWQSLDVGKRVRADMKHQRPAVFWFTGLSGSGKSTIANLFEKKLFATGRHTYILDGDNVRHGLNRDLGFTEADRVENIRRVAEVARLMADAGLIVIVSFISPFSAERRMARELMADGEFVEVFVDTPFEECARRDPKGLYARALNGEIKNFTGVDSPYEAPEKPEIHLKTLGRSAEEMVDALEHWLNERDIAQPPPADNGGSI</sequence>
<keyword id="KW-0067">ATP-binding</keyword>
<keyword id="KW-0342">GTP-binding</keyword>
<keyword id="KW-0418">Kinase</keyword>
<keyword id="KW-0511">Multifunctional enzyme</keyword>
<keyword id="KW-0536">Nodulation</keyword>
<keyword id="KW-0547">Nucleotide-binding</keyword>
<keyword id="KW-0548">Nucleotidyltransferase</keyword>
<keyword id="KW-0808">Transferase</keyword>